<name>PIP11_MUSAC</name>
<feature type="chain" id="PRO_0000455806" description="Aquaporin PIP1-1">
    <location>
        <begin position="1"/>
        <end position="286"/>
    </location>
</feature>
<feature type="topological domain" description="Cytoplasmic" evidence="9">
    <location>
        <begin position="1"/>
        <end position="54"/>
    </location>
</feature>
<feature type="transmembrane region" description="Helical; Name=1" evidence="2">
    <location>
        <begin position="55"/>
        <end position="75"/>
    </location>
</feature>
<feature type="topological domain" description="Extracellular" evidence="9">
    <location>
        <begin position="76"/>
        <end position="88"/>
    </location>
</feature>
<feature type="transmembrane region" description="Helical; Name=2" evidence="2">
    <location>
        <begin position="89"/>
        <end position="109"/>
    </location>
</feature>
<feature type="topological domain" description="Cytoplasmic" evidence="9">
    <location>
        <begin position="110"/>
        <end position="131"/>
    </location>
</feature>
<feature type="transmembrane region" description="Helical; Name=3" evidence="2">
    <location>
        <begin position="132"/>
        <end position="152"/>
    </location>
</feature>
<feature type="topological domain" description="Extracellular" evidence="9">
    <location>
        <begin position="153"/>
        <end position="174"/>
    </location>
</feature>
<feature type="transmembrane region" description="Helical; Name=4" evidence="2">
    <location>
        <begin position="175"/>
        <end position="195"/>
    </location>
</feature>
<feature type="topological domain" description="Cytoplasmic" evidence="9">
    <location>
        <begin position="196"/>
        <end position="208"/>
    </location>
</feature>
<feature type="transmembrane region" description="Helical; Name=5" evidence="2">
    <location>
        <begin position="209"/>
        <end position="229"/>
    </location>
</feature>
<feature type="topological domain" description="Extracellular" evidence="9">
    <location>
        <begin position="230"/>
        <end position="256"/>
    </location>
</feature>
<feature type="transmembrane region" description="Helical; Name=6" evidence="2">
    <location>
        <begin position="257"/>
        <end position="277"/>
    </location>
</feature>
<feature type="topological domain" description="Cytoplasmic" evidence="9">
    <location>
        <begin position="278"/>
        <end position="286"/>
    </location>
</feature>
<feature type="region of interest" description="Disordered" evidence="3">
    <location>
        <begin position="1"/>
        <end position="34"/>
    </location>
</feature>
<feature type="short sequence motif" description="NPA 1" evidence="2">
    <location>
        <begin position="114"/>
        <end position="116"/>
    </location>
</feature>
<feature type="short sequence motif" description="NPA 2" evidence="2">
    <location>
        <begin position="235"/>
        <end position="237"/>
    </location>
</feature>
<dbReference type="EMBL" id="KC969669">
    <property type="protein sequence ID" value="AGT36590.1"/>
    <property type="molecule type" value="mRNA"/>
</dbReference>
<dbReference type="SMR" id="S5ZH89"/>
<dbReference type="GO" id="GO:0005886">
    <property type="term" value="C:plasma membrane"/>
    <property type="evidence" value="ECO:0000314"/>
    <property type="project" value="UniProtKB"/>
</dbReference>
<dbReference type="GO" id="GO:0015267">
    <property type="term" value="F:channel activity"/>
    <property type="evidence" value="ECO:0007669"/>
    <property type="project" value="InterPro"/>
</dbReference>
<dbReference type="GO" id="GO:0009738">
    <property type="term" value="P:abscisic acid-activated signaling pathway"/>
    <property type="evidence" value="ECO:0000314"/>
    <property type="project" value="UniProtKB"/>
</dbReference>
<dbReference type="GO" id="GO:1901002">
    <property type="term" value="P:positive regulation of response to salt stress"/>
    <property type="evidence" value="ECO:0000314"/>
    <property type="project" value="UniProtKB"/>
</dbReference>
<dbReference type="GO" id="GO:0080022">
    <property type="term" value="P:primary root development"/>
    <property type="evidence" value="ECO:0000314"/>
    <property type="project" value="UniProtKB"/>
</dbReference>
<dbReference type="GO" id="GO:2000070">
    <property type="term" value="P:regulation of response to water deprivation"/>
    <property type="evidence" value="ECO:0000314"/>
    <property type="project" value="UniProtKB"/>
</dbReference>
<dbReference type="GO" id="GO:0009409">
    <property type="term" value="P:response to cold"/>
    <property type="evidence" value="ECO:0000314"/>
    <property type="project" value="UniProtKB"/>
</dbReference>
<dbReference type="GO" id="GO:0006970">
    <property type="term" value="P:response to osmotic stress"/>
    <property type="evidence" value="ECO:0000314"/>
    <property type="project" value="UniProtKB"/>
</dbReference>
<dbReference type="GO" id="GO:1902074">
    <property type="term" value="P:response to salt"/>
    <property type="evidence" value="ECO:0000270"/>
    <property type="project" value="UniProtKB"/>
</dbReference>
<dbReference type="GO" id="GO:0009651">
    <property type="term" value="P:response to salt stress"/>
    <property type="evidence" value="ECO:0000314"/>
    <property type="project" value="UniProtKB"/>
</dbReference>
<dbReference type="GO" id="GO:0009414">
    <property type="term" value="P:response to water deprivation"/>
    <property type="evidence" value="ECO:0000314"/>
    <property type="project" value="UniProtKB"/>
</dbReference>
<dbReference type="GO" id="GO:0080147">
    <property type="term" value="P:root hair cell development"/>
    <property type="evidence" value="ECO:0000314"/>
    <property type="project" value="UniProtKB"/>
</dbReference>
<dbReference type="CDD" id="cd00333">
    <property type="entry name" value="MIP"/>
    <property type="match status" value="1"/>
</dbReference>
<dbReference type="FunFam" id="1.20.1080.10:FF:000001">
    <property type="entry name" value="Probable aquaporin PIP1-2"/>
    <property type="match status" value="1"/>
</dbReference>
<dbReference type="Gene3D" id="1.20.1080.10">
    <property type="entry name" value="Glycerol uptake facilitator protein"/>
    <property type="match status" value="1"/>
</dbReference>
<dbReference type="InterPro" id="IPR023271">
    <property type="entry name" value="Aquaporin-like"/>
</dbReference>
<dbReference type="InterPro" id="IPR034294">
    <property type="entry name" value="Aquaporin_transptr"/>
</dbReference>
<dbReference type="InterPro" id="IPR000425">
    <property type="entry name" value="MIP"/>
</dbReference>
<dbReference type="InterPro" id="IPR022357">
    <property type="entry name" value="MIP_CS"/>
</dbReference>
<dbReference type="NCBIfam" id="TIGR00861">
    <property type="entry name" value="MIP"/>
    <property type="match status" value="1"/>
</dbReference>
<dbReference type="PANTHER" id="PTHR45687">
    <property type="entry name" value="AQUAPORIN OR AQUAGLYCEROPORIN RELATED"/>
    <property type="match status" value="1"/>
</dbReference>
<dbReference type="Pfam" id="PF00230">
    <property type="entry name" value="MIP"/>
    <property type="match status" value="1"/>
</dbReference>
<dbReference type="PRINTS" id="PR00783">
    <property type="entry name" value="MINTRINSICP"/>
</dbReference>
<dbReference type="SUPFAM" id="SSF81338">
    <property type="entry name" value="Aquaporin-like"/>
    <property type="match status" value="1"/>
</dbReference>
<dbReference type="PROSITE" id="PS00221">
    <property type="entry name" value="MIP"/>
    <property type="match status" value="1"/>
</dbReference>
<evidence type="ECO:0000250" key="1">
    <source>
        <dbReference type="UniProtKB" id="P30302"/>
    </source>
</evidence>
<evidence type="ECO:0000255" key="2"/>
<evidence type="ECO:0000256" key="3">
    <source>
        <dbReference type="SAM" id="MobiDB-lite"/>
    </source>
</evidence>
<evidence type="ECO:0000269" key="4">
    <source>
    </source>
</evidence>
<evidence type="ECO:0000269" key="5">
    <source>
    </source>
</evidence>
<evidence type="ECO:0000269" key="6">
    <source>
    </source>
</evidence>
<evidence type="ECO:0000303" key="7">
    <source>
    </source>
</evidence>
<evidence type="ECO:0000303" key="8">
    <source>
    </source>
</evidence>
<evidence type="ECO:0000305" key="9"/>
<sequence>MEGKEEDVRLGANKFSERQPIGTAAQSDKGYKEPPPAPLFEPGELTSWSFYRAGIAEFMATFLFLYITILTVMGVVKSNSKCSTVGIQGIAWAFGGMIFALVYCTAGISGGHINPAVTFGLFLARKLSLTRALFYMVMQCLGAICGAGVVKGYQKGLYESNGGGANVVAPGYTKGDGLGAEIVGTFILVYTVFSATDAKRNARDSHVPILAPLPIGFAVFLVHLATIPITGTGINPARSLGAAIIYNKKHAWDDHWIFWVGPFIGAALAAIYHQIVIRAIPFKSRP</sequence>
<accession>S5ZH89</accession>
<comment type="function">
    <text evidence="1 4 6">Water channel required to facilitate the transport of water across cell membrane; mercury-insensitive (By similarity). Promotes primary root elongation and root hair formation (PubMed:24606771). Contributes to the tolerance to multiple abiotic stresses including salt (NaCl), cold and water deprivation, by modulating cytosolic K(+)/Na(+) ratio, maintaining osmotic balance, and reducing membrane injury (e.g. oxidative injury) (PubMed:24606771, PubMed:34512687). Also regulates the expression of abscisic acid (ABA)-responsive genes during dehydration and salt stresses (PubMed:24606771, PubMed:34512687).</text>
</comment>
<comment type="subcellular location">
    <subcellularLocation>
        <location evidence="4">Cell membrane</location>
        <topology evidence="2">Multi-pass membrane protein</topology>
    </subcellularLocation>
</comment>
<comment type="tissue specificity">
    <text evidence="4 5">Expressed in leaves, roots, stems, flowers and fruits, with highest levels in roots.</text>
</comment>
<comment type="developmental stage">
    <text evidence="5">Present in fruit throughout the development, but fades out during ripening.</text>
</comment>
<comment type="induction">
    <text evidence="4 5 6">Induced by salt (NaCl) and water deprivation (PubMed:24606771). Repressed by chilling treatment (PubMed:24606771, PubMed:26307965). Seems to be regulated by several transcription factor genes, including MaERF14, MaDREB1G, MaMYB1R1, MaERF1/39, MabZIP53 and MaMYB22 under salt or cold stresses (PubMed:34512687).</text>
</comment>
<comment type="domain">
    <text evidence="9">Aquaporins contain two tandem repeats each containing three membrane-spanning domains and a pore-forming loop with the signature motif Asn-Pro-Ala (NPA).</text>
</comment>
<comment type="biotechnology">
    <text evidence="4 6">Can be used to improve resistance to abiotic stresses such as cold, drought and salt.</text>
</comment>
<comment type="similarity">
    <text evidence="9">Belongs to the MIP/aquaporin (TC 1.A.8) family. PIP (TC 1.A.8.11) subfamily.</text>
</comment>
<gene>
    <name evidence="7 8" type="primary">PIP1-1</name>
</gene>
<protein>
    <recommendedName>
        <fullName evidence="7 8">Aquaporin PIP1-1</fullName>
    </recommendedName>
    <alternativeName>
        <fullName evidence="7 8">Plasma membrane intrinsic protein 1-1</fullName>
        <shortName evidence="8">MaPIP1-1</shortName>
        <shortName evidence="7">MaPIP1;1</shortName>
    </alternativeName>
</protein>
<proteinExistence type="evidence at protein level"/>
<reference key="1">
    <citation type="journal article" date="2014" name="BMC Plant Biol.">
        <title>A banana aquaporin gene, MaPIP1;1, is involved in tolerance to drought and salt stresses.</title>
        <authorList>
            <person name="Xu Y."/>
            <person name="Hu W."/>
            <person name="Liu J."/>
            <person name="Zhang J."/>
            <person name="Jia C."/>
            <person name="Miao H."/>
            <person name="Xu B."/>
            <person name="Jin Z."/>
        </authorList>
    </citation>
    <scope>NUCLEOTIDE SEQUENCE [MRNA]</scope>
    <scope>FUNCTION</scope>
    <scope>SUBCELLULAR LOCATION</scope>
    <scope>INDUCTION BY SALT; COLD AND WATER DEPRIVATION</scope>
    <scope>TISSUE SPECIFICITY</scope>
    <scope>BIOTECHNOLOGY</scope>
    <source>
        <strain>cv. Brazilian (AAA)</strain>
    </source>
</reference>
<reference key="2">
    <citation type="journal article" date="2015" name="Int. J. Mol. Sci.">
        <title>Genome-wide identification and expression analyses of aquaporin gene family during development and abiotic stress in banana.</title>
        <authorList>
            <person name="Hu W."/>
            <person name="Hou X."/>
            <person name="Huang C."/>
            <person name="Yan Y."/>
            <person name="Tie W."/>
            <person name="Ding Z."/>
            <person name="Wei Y."/>
            <person name="Liu J."/>
            <person name="Miao H."/>
            <person name="Lu Z."/>
            <person name="Li M."/>
            <person name="Xu B."/>
            <person name="Jin Z."/>
        </authorList>
    </citation>
    <scope>REPRESSION BY COLD</scope>
    <scope>TISSUE SPECIFICITY</scope>
    <scope>DEVELOPMENTAL STAGE</scope>
    <scope>GENE FAMILY</scope>
    <scope>NOMENCLATURE</scope>
    <source>
        <strain>cv. Cavendish (AAA)</strain>
    </source>
</reference>
<reference key="3">
    <citation type="journal article" date="2021" name="Front. Plant Sci.">
        <title>Overexpression of a banana aquaporin gene MaPIP1;1 enhances tolerance to multiple abiotic stresses in transgenic banana and analysis of its interacting transcription factors.</title>
        <authorList>
            <person name="Xu Y."/>
            <person name="Liu J."/>
            <person name="Jia C."/>
            <person name="Hu W."/>
            <person name="Song S."/>
            <person name="Xu B."/>
            <person name="Jin Z."/>
        </authorList>
    </citation>
    <scope>FUNCTION</scope>
    <scope>BIOTECHNOLOGY</scope>
    <source>
        <strain>cv. Brazilian (AAA)</strain>
        <strain>cv. Mas (AA)</strain>
    </source>
</reference>
<reference key="4">
    <citation type="journal article" date="2021" name="Front. Plant Sci.">
        <authorList>
            <consortium name="Frontiers Production Office"/>
        </authorList>
    </citation>
    <scope>ERRATUM OF PUBMED:34512687</scope>
</reference>
<organism>
    <name type="scientific">Musa acuminata</name>
    <name type="common">Banana</name>
    <name type="synonym">Musa cavendishii</name>
    <dbReference type="NCBI Taxonomy" id="4641"/>
    <lineage>
        <taxon>Eukaryota</taxon>
        <taxon>Viridiplantae</taxon>
        <taxon>Streptophyta</taxon>
        <taxon>Embryophyta</taxon>
        <taxon>Tracheophyta</taxon>
        <taxon>Spermatophyta</taxon>
        <taxon>Magnoliopsida</taxon>
        <taxon>Liliopsida</taxon>
        <taxon>Zingiberales</taxon>
        <taxon>Musaceae</taxon>
        <taxon>Musa</taxon>
    </lineage>
</organism>
<keyword id="KW-0938">Abscisic acid signaling pathway</keyword>
<keyword id="KW-1003">Cell membrane</keyword>
<keyword id="KW-0472">Membrane</keyword>
<keyword id="KW-0346">Stress response</keyword>
<keyword id="KW-0812">Transmembrane</keyword>
<keyword id="KW-1133">Transmembrane helix</keyword>
<keyword id="KW-0813">Transport</keyword>